<reference key="1">
    <citation type="submission" date="2006-11" db="EMBL/GenBank/DDBJ databases">
        <title>Identification and characterization of a new conjugation/ type IVA secretion system (trb/tra) of L. pneumophila Corby localized on a mobile genomic island.</title>
        <authorList>
            <person name="Gloeckner G."/>
            <person name="Albert-Weissenberger C."/>
            <person name="Weinmann E."/>
            <person name="Jacobi S."/>
            <person name="Schunder E."/>
            <person name="Steinert M."/>
            <person name="Buchrieser C."/>
            <person name="Hacker J."/>
            <person name="Heuner K."/>
        </authorList>
    </citation>
    <scope>NUCLEOTIDE SEQUENCE [LARGE SCALE GENOMIC DNA]</scope>
    <source>
        <strain>Corby</strain>
    </source>
</reference>
<protein>
    <recommendedName>
        <fullName evidence="1">DNA polymerase IV</fullName>
        <shortName evidence="1">Pol IV</shortName>
        <ecNumber evidence="1">2.7.7.7</ecNumber>
    </recommendedName>
</protein>
<feature type="chain" id="PRO_1000137138" description="DNA polymerase IV">
    <location>
        <begin position="1"/>
        <end position="355"/>
    </location>
</feature>
<feature type="domain" description="UmuC" evidence="1">
    <location>
        <begin position="7"/>
        <end position="188"/>
    </location>
</feature>
<feature type="active site" evidence="1">
    <location>
        <position position="107"/>
    </location>
</feature>
<feature type="binding site" evidence="1">
    <location>
        <position position="11"/>
    </location>
    <ligand>
        <name>Mg(2+)</name>
        <dbReference type="ChEBI" id="CHEBI:18420"/>
    </ligand>
</feature>
<feature type="binding site" evidence="1">
    <location>
        <position position="106"/>
    </location>
    <ligand>
        <name>Mg(2+)</name>
        <dbReference type="ChEBI" id="CHEBI:18420"/>
    </ligand>
</feature>
<feature type="site" description="Substrate discrimination" evidence="1">
    <location>
        <position position="16"/>
    </location>
</feature>
<name>DPO4_LEGPC</name>
<accession>A5IH02</accession>
<comment type="function">
    <text evidence="1">Poorly processive, error-prone DNA polymerase involved in untargeted mutagenesis. Copies undamaged DNA at stalled replication forks, which arise in vivo from mismatched or misaligned primer ends. These misaligned primers can be extended by PolIV. Exhibits no 3'-5' exonuclease (proofreading) activity. May be involved in translesional synthesis, in conjunction with the beta clamp from PolIII.</text>
</comment>
<comment type="catalytic activity">
    <reaction evidence="1">
        <text>DNA(n) + a 2'-deoxyribonucleoside 5'-triphosphate = DNA(n+1) + diphosphate</text>
        <dbReference type="Rhea" id="RHEA:22508"/>
        <dbReference type="Rhea" id="RHEA-COMP:17339"/>
        <dbReference type="Rhea" id="RHEA-COMP:17340"/>
        <dbReference type="ChEBI" id="CHEBI:33019"/>
        <dbReference type="ChEBI" id="CHEBI:61560"/>
        <dbReference type="ChEBI" id="CHEBI:173112"/>
        <dbReference type="EC" id="2.7.7.7"/>
    </reaction>
</comment>
<comment type="cofactor">
    <cofactor evidence="1">
        <name>Mg(2+)</name>
        <dbReference type="ChEBI" id="CHEBI:18420"/>
    </cofactor>
    <text evidence="1">Binds 2 magnesium ions per subunit.</text>
</comment>
<comment type="subunit">
    <text evidence="1">Monomer.</text>
</comment>
<comment type="subcellular location">
    <subcellularLocation>
        <location evidence="1">Cytoplasm</location>
    </subcellularLocation>
</comment>
<comment type="similarity">
    <text evidence="1">Belongs to the DNA polymerase type-Y family.</text>
</comment>
<organism>
    <name type="scientific">Legionella pneumophila (strain Corby)</name>
    <dbReference type="NCBI Taxonomy" id="400673"/>
    <lineage>
        <taxon>Bacteria</taxon>
        <taxon>Pseudomonadati</taxon>
        <taxon>Pseudomonadota</taxon>
        <taxon>Gammaproteobacteria</taxon>
        <taxon>Legionellales</taxon>
        <taxon>Legionellaceae</taxon>
        <taxon>Legionella</taxon>
    </lineage>
</organism>
<evidence type="ECO:0000255" key="1">
    <source>
        <dbReference type="HAMAP-Rule" id="MF_01113"/>
    </source>
</evidence>
<keyword id="KW-0963">Cytoplasm</keyword>
<keyword id="KW-0227">DNA damage</keyword>
<keyword id="KW-0234">DNA repair</keyword>
<keyword id="KW-0235">DNA replication</keyword>
<keyword id="KW-0238">DNA-binding</keyword>
<keyword id="KW-0239">DNA-directed DNA polymerase</keyword>
<keyword id="KW-0460">Magnesium</keyword>
<keyword id="KW-0479">Metal-binding</keyword>
<keyword id="KW-0515">Mutator protein</keyword>
<keyword id="KW-0548">Nucleotidyltransferase</keyword>
<keyword id="KW-0808">Transferase</keyword>
<gene>
    <name evidence="1" type="primary">dinB</name>
    <name type="ordered locus">LPC_2746</name>
</gene>
<sequence>MNPIRKIIHIDMDCFYAAIEMRDFPELANKPIAVGGDAKRRGVIATCNYAARQFGIRSAMPTAHALKLCRELILRPVRMDVYQKESQYIRSLLTEYTDLIEPLSLDEAYLDVTESTQCQGSATWIAEEIRARIYQTRQLTASAGIAPNKSLAKIASDWHKPNGQMVIRPEDVSAFVLDLPVRKLFGVGPKMEEKLGALNIKTCADLQRYSVEYLLQKFGTMGQRLYELARGIDNRPVNPERIRKSISVEETYPKDLPNSEACLAVLPELMARLEARIQRAGKISGIHNLFVKLKFNDFQQTTIERVMDKLDLIVLRQLIQEGFARRGMPVRLLGIGIKLKQENTYQSVQLPLLDL</sequence>
<dbReference type="EC" id="2.7.7.7" evidence="1"/>
<dbReference type="EMBL" id="CP000675">
    <property type="protein sequence ID" value="ABQ56652.1"/>
    <property type="molecule type" value="Genomic_DNA"/>
</dbReference>
<dbReference type="RefSeq" id="WP_011945735.1">
    <property type="nucleotide sequence ID" value="NC_009494.2"/>
</dbReference>
<dbReference type="SMR" id="A5IH02"/>
<dbReference type="KEGG" id="lpc:LPC_2746"/>
<dbReference type="HOGENOM" id="CLU_012348_1_2_6"/>
<dbReference type="GO" id="GO:0005829">
    <property type="term" value="C:cytosol"/>
    <property type="evidence" value="ECO:0007669"/>
    <property type="project" value="TreeGrafter"/>
</dbReference>
<dbReference type="GO" id="GO:0003684">
    <property type="term" value="F:damaged DNA binding"/>
    <property type="evidence" value="ECO:0007669"/>
    <property type="project" value="InterPro"/>
</dbReference>
<dbReference type="GO" id="GO:0003887">
    <property type="term" value="F:DNA-directed DNA polymerase activity"/>
    <property type="evidence" value="ECO:0007669"/>
    <property type="project" value="UniProtKB-UniRule"/>
</dbReference>
<dbReference type="GO" id="GO:0000287">
    <property type="term" value="F:magnesium ion binding"/>
    <property type="evidence" value="ECO:0007669"/>
    <property type="project" value="UniProtKB-UniRule"/>
</dbReference>
<dbReference type="GO" id="GO:0006261">
    <property type="term" value="P:DNA-templated DNA replication"/>
    <property type="evidence" value="ECO:0007669"/>
    <property type="project" value="UniProtKB-UniRule"/>
</dbReference>
<dbReference type="GO" id="GO:0042276">
    <property type="term" value="P:error-prone translesion synthesis"/>
    <property type="evidence" value="ECO:0007669"/>
    <property type="project" value="TreeGrafter"/>
</dbReference>
<dbReference type="GO" id="GO:0009432">
    <property type="term" value="P:SOS response"/>
    <property type="evidence" value="ECO:0007669"/>
    <property type="project" value="TreeGrafter"/>
</dbReference>
<dbReference type="CDD" id="cd03586">
    <property type="entry name" value="PolY_Pol_IV_kappa"/>
    <property type="match status" value="1"/>
</dbReference>
<dbReference type="FunFam" id="1.10.150.20:FF:000019">
    <property type="entry name" value="DNA polymerase IV"/>
    <property type="match status" value="1"/>
</dbReference>
<dbReference type="FunFam" id="3.40.1170.60:FF:000001">
    <property type="entry name" value="DNA polymerase IV"/>
    <property type="match status" value="1"/>
</dbReference>
<dbReference type="Gene3D" id="3.30.70.270">
    <property type="match status" value="1"/>
</dbReference>
<dbReference type="Gene3D" id="3.40.1170.60">
    <property type="match status" value="1"/>
</dbReference>
<dbReference type="Gene3D" id="1.10.150.20">
    <property type="entry name" value="5' to 3' exonuclease, C-terminal subdomain"/>
    <property type="match status" value="1"/>
</dbReference>
<dbReference type="Gene3D" id="3.30.1490.100">
    <property type="entry name" value="DNA polymerase, Y-family, little finger domain"/>
    <property type="match status" value="1"/>
</dbReference>
<dbReference type="HAMAP" id="MF_01113">
    <property type="entry name" value="DNApol_IV"/>
    <property type="match status" value="1"/>
</dbReference>
<dbReference type="InterPro" id="IPR043502">
    <property type="entry name" value="DNA/RNA_pol_sf"/>
</dbReference>
<dbReference type="InterPro" id="IPR036775">
    <property type="entry name" value="DNA_pol_Y-fam_lit_finger_sf"/>
</dbReference>
<dbReference type="InterPro" id="IPR017961">
    <property type="entry name" value="DNA_pol_Y-fam_little_finger"/>
</dbReference>
<dbReference type="InterPro" id="IPR050116">
    <property type="entry name" value="DNA_polymerase-Y"/>
</dbReference>
<dbReference type="InterPro" id="IPR022880">
    <property type="entry name" value="DNApol_IV"/>
</dbReference>
<dbReference type="InterPro" id="IPR053848">
    <property type="entry name" value="IMS_HHH_1"/>
</dbReference>
<dbReference type="InterPro" id="IPR043128">
    <property type="entry name" value="Rev_trsase/Diguanyl_cyclase"/>
</dbReference>
<dbReference type="InterPro" id="IPR001126">
    <property type="entry name" value="UmuC"/>
</dbReference>
<dbReference type="NCBIfam" id="NF002677">
    <property type="entry name" value="PRK02406.1"/>
    <property type="match status" value="1"/>
</dbReference>
<dbReference type="PANTHER" id="PTHR11076:SF33">
    <property type="entry name" value="DNA POLYMERASE KAPPA"/>
    <property type="match status" value="1"/>
</dbReference>
<dbReference type="PANTHER" id="PTHR11076">
    <property type="entry name" value="DNA REPAIR POLYMERASE UMUC / TRANSFERASE FAMILY MEMBER"/>
    <property type="match status" value="1"/>
</dbReference>
<dbReference type="Pfam" id="PF00817">
    <property type="entry name" value="IMS"/>
    <property type="match status" value="1"/>
</dbReference>
<dbReference type="Pfam" id="PF11799">
    <property type="entry name" value="IMS_C"/>
    <property type="match status" value="1"/>
</dbReference>
<dbReference type="Pfam" id="PF21999">
    <property type="entry name" value="IMS_HHH_1"/>
    <property type="match status" value="1"/>
</dbReference>
<dbReference type="SUPFAM" id="SSF56672">
    <property type="entry name" value="DNA/RNA polymerases"/>
    <property type="match status" value="1"/>
</dbReference>
<dbReference type="SUPFAM" id="SSF100879">
    <property type="entry name" value="Lesion bypass DNA polymerase (Y-family), little finger domain"/>
    <property type="match status" value="1"/>
</dbReference>
<dbReference type="PROSITE" id="PS50173">
    <property type="entry name" value="UMUC"/>
    <property type="match status" value="1"/>
</dbReference>
<proteinExistence type="inferred from homology"/>